<organism>
    <name type="scientific">Mus musculus</name>
    <name type="common">Mouse</name>
    <dbReference type="NCBI Taxonomy" id="10090"/>
    <lineage>
        <taxon>Eukaryota</taxon>
        <taxon>Metazoa</taxon>
        <taxon>Chordata</taxon>
        <taxon>Craniata</taxon>
        <taxon>Vertebrata</taxon>
        <taxon>Euteleostomi</taxon>
        <taxon>Mammalia</taxon>
        <taxon>Eutheria</taxon>
        <taxon>Euarchontoglires</taxon>
        <taxon>Glires</taxon>
        <taxon>Rodentia</taxon>
        <taxon>Myomorpha</taxon>
        <taxon>Muroidea</taxon>
        <taxon>Muridae</taxon>
        <taxon>Murinae</taxon>
        <taxon>Mus</taxon>
        <taxon>Mus</taxon>
    </lineage>
</organism>
<protein>
    <recommendedName>
        <fullName>Double-stranded RNA-binding protein Staufen homolog 2</fullName>
    </recommendedName>
</protein>
<name>STAU2_MOUSE</name>
<sequence length="570" mass="62535">MANPKEKTPVCLVNELARFHSIQPQYKLLNESGPAHSKMFSVQLSLGEQTWESEGSSIKKAQQAVANKALTESTLPKPVQKPPKSNVNNNPGSITPTVELNGLAMKRGEPAIYRPLDPKPFPNYRANYNFRGMYNQRYHCPMPKIFYVQLTVGNNEFFGEGKTRQAARHNAAMKALQALQNEPIPEKSPQNGESGKEMDDDKDANKSEISLVFEIALKRNMPVSFEVIKESGPPHMKSFVTRVSVGEFSAEGEGNSKKLSKKRAATTVLQELKKLPPLPVVEKPKLFFKKRPKTIVKAGPDYGQGMNPISRLAQIQQARKEKEPDYILLSERGMPRRREFVMQVKVGNEVATGTGPNKKIAKKNAAEAMLLQLGYKASTSLQDPLDKTGENKGWSGPKPGFPEPTNNTPKGILHLSPDVYQEMEASRHRVTSGTTLSYLSPKDMNQPSSSFFSVSPSSTSSATVARELLMNGTSPTAEAIGLKGSSPTSPCSSVQPSKQLEYLARIQGFQAALSALKQFSEQGLESIDGAVNVEKGSLEKQAKHLREKADNNQAKPASISQDCKKSKSAI</sequence>
<dbReference type="EMBL" id="AF459099">
    <property type="protein sequence ID" value="AAN37928.1"/>
    <property type="molecule type" value="mRNA"/>
</dbReference>
<dbReference type="EMBL" id="AF459100">
    <property type="protein sequence ID" value="AAN37929.1"/>
    <property type="molecule type" value="mRNA"/>
</dbReference>
<dbReference type="EMBL" id="AK015087">
    <property type="protein sequence ID" value="BAB29708.1"/>
    <property type="molecule type" value="mRNA"/>
</dbReference>
<dbReference type="EMBL" id="AK028390">
    <property type="protein sequence ID" value="BAC25926.1"/>
    <property type="molecule type" value="mRNA"/>
</dbReference>
<dbReference type="EMBL" id="BC010300">
    <property type="protein sequence ID" value="AAH10300.1"/>
    <property type="molecule type" value="mRNA"/>
</dbReference>
<dbReference type="EMBL" id="BC025118">
    <property type="protein sequence ID" value="AAH25118.1"/>
    <property type="molecule type" value="mRNA"/>
</dbReference>
<dbReference type="CCDS" id="CCDS14831.2">
    <molecule id="Q8CJ67-1"/>
</dbReference>
<dbReference type="CCDS" id="CCDS48223.1">
    <molecule id="Q8CJ67-2"/>
</dbReference>
<dbReference type="CCDS" id="CCDS83529.1">
    <molecule id="Q8CJ67-3"/>
</dbReference>
<dbReference type="RefSeq" id="NP_001104742.1">
    <molecule id="Q8CJ67-2"/>
    <property type="nucleotide sequence ID" value="NM_001111272.1"/>
</dbReference>
<dbReference type="RefSeq" id="NP_001333974.1">
    <molecule id="Q8CJ67-3"/>
    <property type="nucleotide sequence ID" value="NM_001347045.1"/>
</dbReference>
<dbReference type="RefSeq" id="NP_079579.2">
    <molecule id="Q8CJ67-1"/>
    <property type="nucleotide sequence ID" value="NM_025303.3"/>
</dbReference>
<dbReference type="RefSeq" id="XP_006495591.1">
    <molecule id="Q8CJ67-1"/>
    <property type="nucleotide sequence ID" value="XM_006495528.5"/>
</dbReference>
<dbReference type="RefSeq" id="XP_006495595.1">
    <molecule id="Q8CJ67-2"/>
    <property type="nucleotide sequence ID" value="XM_006495532.5"/>
</dbReference>
<dbReference type="RefSeq" id="XP_011236689.1">
    <molecule id="Q8CJ67-1"/>
    <property type="nucleotide sequence ID" value="XM_011238387.2"/>
</dbReference>
<dbReference type="RefSeq" id="XP_011236691.1">
    <molecule id="Q8CJ67-2"/>
    <property type="nucleotide sequence ID" value="XM_011238389.3"/>
</dbReference>
<dbReference type="RefSeq" id="XP_017176591.1">
    <molecule id="Q8CJ67-1"/>
    <property type="nucleotide sequence ID" value="XM_017321102.3"/>
</dbReference>
<dbReference type="RefSeq" id="XP_030110674.1">
    <molecule id="Q8CJ67-1"/>
    <property type="nucleotide sequence ID" value="XM_030254814.2"/>
</dbReference>
<dbReference type="RefSeq" id="XP_036021540.1">
    <molecule id="Q8CJ67-2"/>
    <property type="nucleotide sequence ID" value="XM_036165647.1"/>
</dbReference>
<dbReference type="RefSeq" id="XP_036021541.1">
    <molecule id="Q8CJ67-2"/>
    <property type="nucleotide sequence ID" value="XM_036165648.1"/>
</dbReference>
<dbReference type="PDB" id="1UHZ">
    <property type="method" value="NMR"/>
    <property type="chains" value="A=308-383"/>
</dbReference>
<dbReference type="PDBsum" id="1UHZ"/>
<dbReference type="SMR" id="Q8CJ67"/>
<dbReference type="BioGRID" id="205899">
    <property type="interactions" value="20"/>
</dbReference>
<dbReference type="FunCoup" id="Q8CJ67">
    <property type="interactions" value="2158"/>
</dbReference>
<dbReference type="IntAct" id="Q8CJ67">
    <property type="interactions" value="3"/>
</dbReference>
<dbReference type="MINT" id="Q8CJ67"/>
<dbReference type="STRING" id="10090.ENSMUSP00000124505"/>
<dbReference type="GlyGen" id="Q8CJ67">
    <property type="glycosylation" value="4 sites, 2 N-linked glycans (2 sites), 1 O-linked glycan (2 sites)"/>
</dbReference>
<dbReference type="iPTMnet" id="Q8CJ67"/>
<dbReference type="PhosphoSitePlus" id="Q8CJ67"/>
<dbReference type="jPOST" id="Q8CJ67"/>
<dbReference type="PaxDb" id="10090-ENSMUSP00000124505"/>
<dbReference type="PeptideAtlas" id="Q8CJ67"/>
<dbReference type="ProteomicsDB" id="254582">
    <molecule id="Q8CJ67-1"/>
</dbReference>
<dbReference type="ProteomicsDB" id="254583">
    <molecule id="Q8CJ67-2"/>
</dbReference>
<dbReference type="ProteomicsDB" id="254584">
    <molecule id="Q8CJ67-3"/>
</dbReference>
<dbReference type="ProteomicsDB" id="254585">
    <molecule id="Q8CJ67-4"/>
</dbReference>
<dbReference type="ProteomicsDB" id="254586">
    <molecule id="Q8CJ67-5"/>
</dbReference>
<dbReference type="Pumba" id="Q8CJ67"/>
<dbReference type="Antibodypedia" id="1305">
    <property type="antibodies" value="243 antibodies from 25 providers"/>
</dbReference>
<dbReference type="DNASU" id="29819"/>
<dbReference type="Ensembl" id="ENSMUST00000027052.13">
    <molecule id="Q8CJ67-2"/>
    <property type="protein sequence ID" value="ENSMUSP00000027052.7"/>
    <property type="gene ID" value="ENSMUSG00000025920.20"/>
</dbReference>
<dbReference type="Ensembl" id="ENSMUST00000054668.13">
    <molecule id="Q8CJ67-1"/>
    <property type="protein sequence ID" value="ENSMUSP00000053190.7"/>
    <property type="gene ID" value="ENSMUSG00000025920.20"/>
</dbReference>
<dbReference type="Ensembl" id="ENSMUST00000115359.10">
    <molecule id="Q8CJ67-5"/>
    <property type="protein sequence ID" value="ENSMUSP00000111016.4"/>
    <property type="gene ID" value="ENSMUSG00000025920.20"/>
</dbReference>
<dbReference type="Ensembl" id="ENSMUST00000144138.4">
    <molecule id="Q8CJ67-5"/>
    <property type="protein sequence ID" value="ENSMUSP00000119130.3"/>
    <property type="gene ID" value="ENSMUSG00000025920.20"/>
</dbReference>
<dbReference type="Ensembl" id="ENSMUST00000159558.8">
    <molecule id="Q8CJ67-3"/>
    <property type="protein sequence ID" value="ENSMUSP00000125726.2"/>
    <property type="gene ID" value="ENSMUSG00000025920.20"/>
</dbReference>
<dbReference type="Ensembl" id="ENSMUST00000162007.8">
    <molecule id="Q8CJ67-3"/>
    <property type="protein sequence ID" value="ENSMUSP00000124303.2"/>
    <property type="gene ID" value="ENSMUSG00000025920.20"/>
</dbReference>
<dbReference type="Ensembl" id="ENSMUST00000162435.8">
    <molecule id="Q8CJ67-2"/>
    <property type="protein sequence ID" value="ENSMUSP00000123827.2"/>
    <property type="gene ID" value="ENSMUSG00000025920.20"/>
</dbReference>
<dbReference type="Ensembl" id="ENSMUST00000162627.8">
    <molecule id="Q8CJ67-2"/>
    <property type="protein sequence ID" value="ENSMUSP00000123781.2"/>
    <property type="gene ID" value="ENSMUSG00000025920.20"/>
</dbReference>
<dbReference type="Ensembl" id="ENSMUST00000162751.8">
    <molecule id="Q8CJ67-1"/>
    <property type="protein sequence ID" value="ENSMUSP00000124505.2"/>
    <property type="gene ID" value="ENSMUSG00000025920.20"/>
</dbReference>
<dbReference type="GeneID" id="29819"/>
<dbReference type="KEGG" id="mmu:29819"/>
<dbReference type="UCSC" id="uc007ajn.2">
    <molecule id="Q8CJ67-1"/>
    <property type="organism name" value="mouse"/>
</dbReference>
<dbReference type="UCSC" id="uc007ajo.2">
    <molecule id="Q8CJ67-2"/>
    <property type="organism name" value="mouse"/>
</dbReference>
<dbReference type="UCSC" id="uc007ajq.2">
    <molecule id="Q8CJ67-3"/>
    <property type="organism name" value="mouse"/>
</dbReference>
<dbReference type="UCSC" id="uc007ajr.2">
    <molecule id="Q8CJ67-5"/>
    <property type="organism name" value="mouse"/>
</dbReference>
<dbReference type="AGR" id="MGI:1352508"/>
<dbReference type="CTD" id="27067"/>
<dbReference type="MGI" id="MGI:1352508">
    <property type="gene designation" value="Stau2"/>
</dbReference>
<dbReference type="VEuPathDB" id="HostDB:ENSMUSG00000025920"/>
<dbReference type="eggNOG" id="KOG3732">
    <property type="taxonomic scope" value="Eukaryota"/>
</dbReference>
<dbReference type="GeneTree" id="ENSGT00940000154977"/>
<dbReference type="HOGENOM" id="CLU_162785_0_0_1"/>
<dbReference type="InParanoid" id="Q8CJ67"/>
<dbReference type="OMA" id="RPANHAQ"/>
<dbReference type="OrthoDB" id="10037267at2759"/>
<dbReference type="PhylomeDB" id="Q8CJ67"/>
<dbReference type="TreeFam" id="TF350296"/>
<dbReference type="BioGRID-ORCS" id="29819">
    <property type="hits" value="1 hit in 77 CRISPR screens"/>
</dbReference>
<dbReference type="CD-CODE" id="764D0258">
    <property type="entry name" value="Neuronal RNP granule"/>
</dbReference>
<dbReference type="ChiTaRS" id="Stau2">
    <property type="organism name" value="mouse"/>
</dbReference>
<dbReference type="EvolutionaryTrace" id="Q8CJ67"/>
<dbReference type="PRO" id="PR:Q8CJ67"/>
<dbReference type="Proteomes" id="UP000000589">
    <property type="component" value="Chromosome 1"/>
</dbReference>
<dbReference type="RNAct" id="Q8CJ67">
    <property type="molecule type" value="protein"/>
</dbReference>
<dbReference type="Bgee" id="ENSMUSG00000025920">
    <property type="expression patterns" value="Expressed in embryonic brain and 265 other cell types or tissues"/>
</dbReference>
<dbReference type="ExpressionAtlas" id="Q8CJ67">
    <property type="expression patterns" value="baseline and differential"/>
</dbReference>
<dbReference type="GO" id="GO:0030424">
    <property type="term" value="C:axon"/>
    <property type="evidence" value="ECO:0007669"/>
    <property type="project" value="Ensembl"/>
</dbReference>
<dbReference type="GO" id="GO:0010494">
    <property type="term" value="C:cytoplasmic stress granule"/>
    <property type="evidence" value="ECO:0007669"/>
    <property type="project" value="Ensembl"/>
</dbReference>
<dbReference type="GO" id="GO:0032839">
    <property type="term" value="C:dendrite cytoplasm"/>
    <property type="evidence" value="ECO:0007669"/>
    <property type="project" value="GOC"/>
</dbReference>
<dbReference type="GO" id="GO:0043198">
    <property type="term" value="C:dendritic shaft"/>
    <property type="evidence" value="ECO:0007669"/>
    <property type="project" value="Ensembl"/>
</dbReference>
<dbReference type="GO" id="GO:0005783">
    <property type="term" value="C:endoplasmic reticulum"/>
    <property type="evidence" value="ECO:0007669"/>
    <property type="project" value="UniProtKB-SubCell"/>
</dbReference>
<dbReference type="GO" id="GO:0098978">
    <property type="term" value="C:glutamatergic synapse"/>
    <property type="evidence" value="ECO:0007669"/>
    <property type="project" value="Ensembl"/>
</dbReference>
<dbReference type="GO" id="GO:0005874">
    <property type="term" value="C:microtubule"/>
    <property type="evidence" value="ECO:0007669"/>
    <property type="project" value="UniProtKB-KW"/>
</dbReference>
<dbReference type="GO" id="GO:0043025">
    <property type="term" value="C:neuronal cell body"/>
    <property type="evidence" value="ECO:0007669"/>
    <property type="project" value="Ensembl"/>
</dbReference>
<dbReference type="GO" id="GO:0031965">
    <property type="term" value="C:nuclear membrane"/>
    <property type="evidence" value="ECO:0007669"/>
    <property type="project" value="Ensembl"/>
</dbReference>
<dbReference type="GO" id="GO:0005730">
    <property type="term" value="C:nucleolus"/>
    <property type="evidence" value="ECO:0007669"/>
    <property type="project" value="UniProtKB-SubCell"/>
</dbReference>
<dbReference type="GO" id="GO:0098794">
    <property type="term" value="C:postsynapse"/>
    <property type="evidence" value="ECO:0007669"/>
    <property type="project" value="Ensembl"/>
</dbReference>
<dbReference type="GO" id="GO:0032991">
    <property type="term" value="C:protein-containing complex"/>
    <property type="evidence" value="ECO:0007669"/>
    <property type="project" value="Ensembl"/>
</dbReference>
<dbReference type="GO" id="GO:0003725">
    <property type="term" value="F:double-stranded RNA binding"/>
    <property type="evidence" value="ECO:0000266"/>
    <property type="project" value="MGI"/>
</dbReference>
<dbReference type="GO" id="GO:0030544">
    <property type="term" value="F:Hsp70 protein binding"/>
    <property type="evidence" value="ECO:0007669"/>
    <property type="project" value="Ensembl"/>
</dbReference>
<dbReference type="GO" id="GO:0019894">
    <property type="term" value="F:kinesin binding"/>
    <property type="evidence" value="ECO:0007669"/>
    <property type="project" value="Ensembl"/>
</dbReference>
<dbReference type="GO" id="GO:0051019">
    <property type="term" value="F:mitogen-activated protein kinase binding"/>
    <property type="evidence" value="ECO:0007669"/>
    <property type="project" value="Ensembl"/>
</dbReference>
<dbReference type="GO" id="GO:0043022">
    <property type="term" value="F:ribosome binding"/>
    <property type="evidence" value="ECO:0007669"/>
    <property type="project" value="Ensembl"/>
</dbReference>
<dbReference type="GO" id="GO:0098964">
    <property type="term" value="P:anterograde dendritic transport of messenger ribonucleoprotein complex"/>
    <property type="evidence" value="ECO:0007669"/>
    <property type="project" value="Ensembl"/>
</dbReference>
<dbReference type="GO" id="GO:0034599">
    <property type="term" value="P:cellular response to oxidative stress"/>
    <property type="evidence" value="ECO:0007669"/>
    <property type="project" value="Ensembl"/>
</dbReference>
<dbReference type="GO" id="GO:0048592">
    <property type="term" value="P:eye morphogenesis"/>
    <property type="evidence" value="ECO:0007669"/>
    <property type="project" value="Ensembl"/>
</dbReference>
<dbReference type="GO" id="GO:0061003">
    <property type="term" value="P:positive regulation of dendritic spine morphogenesis"/>
    <property type="evidence" value="ECO:0007669"/>
    <property type="project" value="Ensembl"/>
</dbReference>
<dbReference type="GO" id="GO:1900454">
    <property type="term" value="P:positive regulation of long-term synaptic depression"/>
    <property type="evidence" value="ECO:0007669"/>
    <property type="project" value="Ensembl"/>
</dbReference>
<dbReference type="GO" id="GO:0051965">
    <property type="term" value="P:positive regulation of synapse assembly"/>
    <property type="evidence" value="ECO:0007669"/>
    <property type="project" value="Ensembl"/>
</dbReference>
<dbReference type="GO" id="GO:0032956">
    <property type="term" value="P:regulation of actin cytoskeleton organization"/>
    <property type="evidence" value="ECO:0007669"/>
    <property type="project" value="Ensembl"/>
</dbReference>
<dbReference type="GO" id="GO:0051489">
    <property type="term" value="P:regulation of filopodium assembly"/>
    <property type="evidence" value="ECO:0007669"/>
    <property type="project" value="Ensembl"/>
</dbReference>
<dbReference type="CDD" id="cd19882">
    <property type="entry name" value="DSRM_STAU2_rpt2"/>
    <property type="match status" value="1"/>
</dbReference>
<dbReference type="CDD" id="cd19884">
    <property type="entry name" value="DSRM_STAU2_rpt3"/>
    <property type="match status" value="1"/>
</dbReference>
<dbReference type="CDD" id="cd19886">
    <property type="entry name" value="DSRM_STAU2_rpt4"/>
    <property type="match status" value="1"/>
</dbReference>
<dbReference type="FunFam" id="3.30.160.20:FF:000007">
    <property type="entry name" value="Double-stranded RNA-binding protein Staufen homolog 1"/>
    <property type="match status" value="1"/>
</dbReference>
<dbReference type="FunFam" id="3.30.160.20:FF:000024">
    <property type="entry name" value="double-stranded RNA-binding protein Staufen homolog 1 isoform X1"/>
    <property type="match status" value="1"/>
</dbReference>
<dbReference type="FunFam" id="3.30.160.20:FF:000057">
    <property type="entry name" value="Double-stranded RNA-binding protein Staufen homolog 2"/>
    <property type="match status" value="1"/>
</dbReference>
<dbReference type="FunFam" id="3.30.160.20:FF:000013">
    <property type="entry name" value="double-stranded RNA-binding protein Staufen homolog 2 isoform X3"/>
    <property type="match status" value="1"/>
</dbReference>
<dbReference type="Gene3D" id="3.30.160.20">
    <property type="match status" value="4"/>
</dbReference>
<dbReference type="Gene3D" id="6.10.250.1360">
    <property type="match status" value="1"/>
</dbReference>
<dbReference type="InterPro" id="IPR051740">
    <property type="entry name" value="DRBM-containing_protein"/>
</dbReference>
<dbReference type="InterPro" id="IPR014720">
    <property type="entry name" value="dsRBD_dom"/>
</dbReference>
<dbReference type="InterPro" id="IPR044464">
    <property type="entry name" value="STAU2_DSRM_2"/>
</dbReference>
<dbReference type="InterPro" id="IPR044473">
    <property type="entry name" value="STAU2_DSRM_3"/>
</dbReference>
<dbReference type="InterPro" id="IPR044474">
    <property type="entry name" value="STAU2_DSRM_4"/>
</dbReference>
<dbReference type="InterPro" id="IPR032478">
    <property type="entry name" value="Staufen_C"/>
</dbReference>
<dbReference type="PANTHER" id="PTHR46054:SF1">
    <property type="entry name" value="DOUBLE-STRANDED RNA-BINDING PROTEIN STAUFEN HOMOLOG 2"/>
    <property type="match status" value="1"/>
</dbReference>
<dbReference type="PANTHER" id="PTHR46054">
    <property type="entry name" value="MATERNAL EFFECT PROTEIN STAUFEN"/>
    <property type="match status" value="1"/>
</dbReference>
<dbReference type="Pfam" id="PF00035">
    <property type="entry name" value="dsrm"/>
    <property type="match status" value="4"/>
</dbReference>
<dbReference type="Pfam" id="PF16482">
    <property type="entry name" value="Staufen_C"/>
    <property type="match status" value="1"/>
</dbReference>
<dbReference type="SMART" id="SM00358">
    <property type="entry name" value="DSRM"/>
    <property type="match status" value="4"/>
</dbReference>
<dbReference type="SUPFAM" id="SSF54768">
    <property type="entry name" value="dsRNA-binding domain-like"/>
    <property type="match status" value="4"/>
</dbReference>
<dbReference type="PROSITE" id="PS50137">
    <property type="entry name" value="DS_RBD"/>
    <property type="match status" value="4"/>
</dbReference>
<reference key="1">
    <citation type="journal article" date="2002" name="J. Cell Sci.">
        <title>Staufen2 isoforms localize to the somatodendritic domain of neurons and interact with different organelles.</title>
        <authorList>
            <person name="Duchaine T.F."/>
            <person name="Hemraj I."/>
            <person name="Furic L."/>
            <person name="Deitinghoff A."/>
            <person name="Kiebler M.A."/>
            <person name="DesGroseillers L."/>
        </authorList>
    </citation>
    <scope>NUCLEOTIDE SEQUENCE [MRNA] (ISOFORMS 1 AND 2)</scope>
    <scope>RNA-BINDING</scope>
    <scope>DOMAIN</scope>
    <scope>TISSUE SPECIFICITY</scope>
    <source>
        <strain>BALB/cJ</strain>
    </source>
</reference>
<reference key="2">
    <citation type="journal article" date="2005" name="Science">
        <title>The transcriptional landscape of the mammalian genome.</title>
        <authorList>
            <person name="Carninci P."/>
            <person name="Kasukawa T."/>
            <person name="Katayama S."/>
            <person name="Gough J."/>
            <person name="Frith M.C."/>
            <person name="Maeda N."/>
            <person name="Oyama R."/>
            <person name="Ravasi T."/>
            <person name="Lenhard B."/>
            <person name="Wells C."/>
            <person name="Kodzius R."/>
            <person name="Shimokawa K."/>
            <person name="Bajic V.B."/>
            <person name="Brenner S.E."/>
            <person name="Batalov S."/>
            <person name="Forrest A.R."/>
            <person name="Zavolan M."/>
            <person name="Davis M.J."/>
            <person name="Wilming L.G."/>
            <person name="Aidinis V."/>
            <person name="Allen J.E."/>
            <person name="Ambesi-Impiombato A."/>
            <person name="Apweiler R."/>
            <person name="Aturaliya R.N."/>
            <person name="Bailey T.L."/>
            <person name="Bansal M."/>
            <person name="Baxter L."/>
            <person name="Beisel K.W."/>
            <person name="Bersano T."/>
            <person name="Bono H."/>
            <person name="Chalk A.M."/>
            <person name="Chiu K.P."/>
            <person name="Choudhary V."/>
            <person name="Christoffels A."/>
            <person name="Clutterbuck D.R."/>
            <person name="Crowe M.L."/>
            <person name="Dalla E."/>
            <person name="Dalrymple B.P."/>
            <person name="de Bono B."/>
            <person name="Della Gatta G."/>
            <person name="di Bernardo D."/>
            <person name="Down T."/>
            <person name="Engstrom P."/>
            <person name="Fagiolini M."/>
            <person name="Faulkner G."/>
            <person name="Fletcher C.F."/>
            <person name="Fukushima T."/>
            <person name="Furuno M."/>
            <person name="Futaki S."/>
            <person name="Gariboldi M."/>
            <person name="Georgii-Hemming P."/>
            <person name="Gingeras T.R."/>
            <person name="Gojobori T."/>
            <person name="Green R.E."/>
            <person name="Gustincich S."/>
            <person name="Harbers M."/>
            <person name="Hayashi Y."/>
            <person name="Hensch T.K."/>
            <person name="Hirokawa N."/>
            <person name="Hill D."/>
            <person name="Huminiecki L."/>
            <person name="Iacono M."/>
            <person name="Ikeo K."/>
            <person name="Iwama A."/>
            <person name="Ishikawa T."/>
            <person name="Jakt M."/>
            <person name="Kanapin A."/>
            <person name="Katoh M."/>
            <person name="Kawasawa Y."/>
            <person name="Kelso J."/>
            <person name="Kitamura H."/>
            <person name="Kitano H."/>
            <person name="Kollias G."/>
            <person name="Krishnan S.P."/>
            <person name="Kruger A."/>
            <person name="Kummerfeld S.K."/>
            <person name="Kurochkin I.V."/>
            <person name="Lareau L.F."/>
            <person name="Lazarevic D."/>
            <person name="Lipovich L."/>
            <person name="Liu J."/>
            <person name="Liuni S."/>
            <person name="McWilliam S."/>
            <person name="Madan Babu M."/>
            <person name="Madera M."/>
            <person name="Marchionni L."/>
            <person name="Matsuda H."/>
            <person name="Matsuzawa S."/>
            <person name="Miki H."/>
            <person name="Mignone F."/>
            <person name="Miyake S."/>
            <person name="Morris K."/>
            <person name="Mottagui-Tabar S."/>
            <person name="Mulder N."/>
            <person name="Nakano N."/>
            <person name="Nakauchi H."/>
            <person name="Ng P."/>
            <person name="Nilsson R."/>
            <person name="Nishiguchi S."/>
            <person name="Nishikawa S."/>
            <person name="Nori F."/>
            <person name="Ohara O."/>
            <person name="Okazaki Y."/>
            <person name="Orlando V."/>
            <person name="Pang K.C."/>
            <person name="Pavan W.J."/>
            <person name="Pavesi G."/>
            <person name="Pesole G."/>
            <person name="Petrovsky N."/>
            <person name="Piazza S."/>
            <person name="Reed J."/>
            <person name="Reid J.F."/>
            <person name="Ring B.Z."/>
            <person name="Ringwald M."/>
            <person name="Rost B."/>
            <person name="Ruan Y."/>
            <person name="Salzberg S.L."/>
            <person name="Sandelin A."/>
            <person name="Schneider C."/>
            <person name="Schoenbach C."/>
            <person name="Sekiguchi K."/>
            <person name="Semple C.A."/>
            <person name="Seno S."/>
            <person name="Sessa L."/>
            <person name="Sheng Y."/>
            <person name="Shibata Y."/>
            <person name="Shimada H."/>
            <person name="Shimada K."/>
            <person name="Silva D."/>
            <person name="Sinclair B."/>
            <person name="Sperling S."/>
            <person name="Stupka E."/>
            <person name="Sugiura K."/>
            <person name="Sultana R."/>
            <person name="Takenaka Y."/>
            <person name="Taki K."/>
            <person name="Tammoja K."/>
            <person name="Tan S.L."/>
            <person name="Tang S."/>
            <person name="Taylor M.S."/>
            <person name="Tegner J."/>
            <person name="Teichmann S.A."/>
            <person name="Ueda H.R."/>
            <person name="van Nimwegen E."/>
            <person name="Verardo R."/>
            <person name="Wei C.L."/>
            <person name="Yagi K."/>
            <person name="Yamanishi H."/>
            <person name="Zabarovsky E."/>
            <person name="Zhu S."/>
            <person name="Zimmer A."/>
            <person name="Hide W."/>
            <person name="Bult C."/>
            <person name="Grimmond S.M."/>
            <person name="Teasdale R.D."/>
            <person name="Liu E.T."/>
            <person name="Brusic V."/>
            <person name="Quackenbush J."/>
            <person name="Wahlestedt C."/>
            <person name="Mattick J.S."/>
            <person name="Hume D.A."/>
            <person name="Kai C."/>
            <person name="Sasaki D."/>
            <person name="Tomaru Y."/>
            <person name="Fukuda S."/>
            <person name="Kanamori-Katayama M."/>
            <person name="Suzuki M."/>
            <person name="Aoki J."/>
            <person name="Arakawa T."/>
            <person name="Iida J."/>
            <person name="Imamura K."/>
            <person name="Itoh M."/>
            <person name="Kato T."/>
            <person name="Kawaji H."/>
            <person name="Kawagashira N."/>
            <person name="Kawashima T."/>
            <person name="Kojima M."/>
            <person name="Kondo S."/>
            <person name="Konno H."/>
            <person name="Nakano K."/>
            <person name="Ninomiya N."/>
            <person name="Nishio T."/>
            <person name="Okada M."/>
            <person name="Plessy C."/>
            <person name="Shibata K."/>
            <person name="Shiraki T."/>
            <person name="Suzuki S."/>
            <person name="Tagami M."/>
            <person name="Waki K."/>
            <person name="Watahiki A."/>
            <person name="Okamura-Oho Y."/>
            <person name="Suzuki H."/>
            <person name="Kawai J."/>
            <person name="Hayashizaki Y."/>
        </authorList>
    </citation>
    <scope>NUCLEOTIDE SEQUENCE [LARGE SCALE MRNA] (ISOFORMS 4 AND 5)</scope>
    <source>
        <strain>C57BL/6J</strain>
        <tissue>Extraembryonic tissue</tissue>
        <tissue>Placenta</tissue>
        <tissue>Testis</tissue>
    </source>
</reference>
<reference key="3">
    <citation type="journal article" date="2004" name="Genome Res.">
        <title>The status, quality, and expansion of the NIH full-length cDNA project: the Mammalian Gene Collection (MGC).</title>
        <authorList>
            <consortium name="The MGC Project Team"/>
        </authorList>
    </citation>
    <scope>NUCLEOTIDE SEQUENCE [LARGE SCALE MRNA] (ISOFORM 3)</scope>
    <scope>NUCLEOTIDE SEQUENCE [LARGE SCALE MRNA] OF 42-570 (ISOFORMS 1/2)</scope>
    <source>
        <strain>FVB/N</strain>
        <tissue>Mammary tumor</tissue>
    </source>
</reference>
<reference key="4">
    <citation type="journal article" date="2003" name="J. Neurochem.">
        <title>Localization of the RNA-binding proteins Staufen1 and Staufen2 at the mammalian neuromuscular junction.</title>
        <authorList>
            <person name="Belanger G."/>
            <person name="Stocksley M.A."/>
            <person name="Vandromme M."/>
            <person name="Schaeffer L."/>
            <person name="Furic L."/>
            <person name="DesGroseillers L."/>
            <person name="Jasmin B.J."/>
        </authorList>
    </citation>
    <scope>TISSUE SPECIFICITY</scope>
    <scope>INDUCTION</scope>
</reference>
<reference key="5">
    <citation type="journal article" date="2004" name="J. Biol. Chem.">
        <title>The brain-specific double-stranded RNA-binding protein Staufen2: nucleolar accumulation and isoform-specific exportin-5-dependent export.</title>
        <authorList>
            <person name="Macchi P."/>
            <person name="Brownawell A.M."/>
            <person name="Grunewald B."/>
            <person name="DesGroseillers L."/>
            <person name="Macara I.G."/>
            <person name="Kiebler M.A."/>
        </authorList>
    </citation>
    <scope>INTERACTION WITH XPO5</scope>
    <scope>SUBCELLULAR LOCATION</scope>
    <scope>DOMAIN NLS 1</scope>
    <scope>MUTAGENESIS OF HIS-235; LYS-237; 273-LYS-LYS-274 AND 289-LYS--ARG-291</scope>
</reference>
<reference key="6">
    <citation type="submission" date="2003-07" db="PDB data bank">
        <title>Solution structure of DSRNA binding domain in Staufen homolog 2.</title>
        <authorList>
            <consortium name="RIKEN structural genomics initiative (RSGI)"/>
        </authorList>
    </citation>
    <scope>STRUCTURE BY NMR OF 308-383</scope>
</reference>
<feature type="chain" id="PRO_0000072247" description="Double-stranded RNA-binding protein Staufen homolog 2">
    <location>
        <begin position="1"/>
        <end position="570"/>
    </location>
</feature>
<feature type="domain" description="DRBM 1" evidence="4">
    <location>
        <begin position="8"/>
        <end position="75"/>
    </location>
</feature>
<feature type="domain" description="DRBM 2" evidence="4">
    <location>
        <begin position="95"/>
        <end position="181"/>
    </location>
</feature>
<feature type="domain" description="DRBM 3" evidence="4">
    <location>
        <begin position="207"/>
        <end position="274"/>
    </location>
</feature>
<feature type="domain" description="DRBM 4" evidence="4">
    <location>
        <begin position="307"/>
        <end position="375"/>
    </location>
</feature>
<feature type="region of interest" description="Disordered" evidence="5">
    <location>
        <begin position="71"/>
        <end position="94"/>
    </location>
</feature>
<feature type="region of interest" description="Disordered" evidence="5">
    <location>
        <begin position="178"/>
        <end position="203"/>
    </location>
</feature>
<feature type="region of interest" description="Required for dendritic transport" evidence="1">
    <location>
        <begin position="381"/>
        <end position="570"/>
    </location>
</feature>
<feature type="region of interest" description="Disordered" evidence="5">
    <location>
        <begin position="381"/>
        <end position="413"/>
    </location>
</feature>
<feature type="region of interest" description="Disordered" evidence="5">
    <location>
        <begin position="545"/>
        <end position="570"/>
    </location>
</feature>
<feature type="short sequence motif" description="Nuclear localization signal 1">
    <location>
        <begin position="273"/>
        <end position="291"/>
    </location>
</feature>
<feature type="short sequence motif" description="Nuclear localization signal 2" evidence="1">
    <location>
        <begin position="373"/>
        <end position="412"/>
    </location>
</feature>
<feature type="compositionally biased region" description="Polar residues" evidence="5">
    <location>
        <begin position="83"/>
        <end position="94"/>
    </location>
</feature>
<feature type="compositionally biased region" description="Basic and acidic residues" evidence="5">
    <location>
        <begin position="194"/>
        <end position="203"/>
    </location>
</feature>
<feature type="compositionally biased region" description="Polar residues" evidence="5">
    <location>
        <begin position="551"/>
        <end position="561"/>
    </location>
</feature>
<feature type="modified residue" description="Phosphoserine" evidence="3">
    <location>
        <position position="188"/>
    </location>
</feature>
<feature type="modified residue" description="Phosphoserine" evidence="3">
    <location>
        <position position="395"/>
    </location>
</feature>
<feature type="modified residue" description="Phosphothreonine" evidence="3">
    <location>
        <position position="405"/>
    </location>
</feature>
<feature type="modified residue" description="Phosphoserine" evidence="3">
    <location>
        <position position="416"/>
    </location>
</feature>
<feature type="modified residue" description="Phosphoserine" evidence="3">
    <location>
        <position position="426"/>
    </location>
</feature>
<feature type="modified residue" description="Phosphoserine" evidence="3">
    <location>
        <position position="440"/>
    </location>
</feature>
<feature type="modified residue" description="Phosphoserine" evidence="3">
    <location>
        <position position="455"/>
    </location>
</feature>
<feature type="modified residue" description="Phosphoserine" evidence="3">
    <location>
        <position position="492"/>
    </location>
</feature>
<feature type="splice variant" id="VSP_015378" description="In isoform 4." evidence="11">
    <location>
        <begin position="1"/>
        <end position="305"/>
    </location>
</feature>
<feature type="splice variant" id="VSP_015379" description="In isoform 2 and isoform 3." evidence="9 10">
    <location>
        <begin position="1"/>
        <end position="32"/>
    </location>
</feature>
<feature type="splice variant" id="VSP_015380" description="In isoform 2 and isoform 3." evidence="9 10">
    <original>GPAHSK</original>
    <variation>MLQINQ</variation>
    <location>
        <begin position="33"/>
        <end position="38"/>
    </location>
</feature>
<feature type="splice variant" id="VSP_015381" description="In isoform 5." evidence="11">
    <original>GSITPTVELNGLAMKRGEPAIYRPLDPKPFPNYR</original>
    <variation>VGKLKETVLSPAHEVMIVGITHYSADNFFLHWCL</variation>
    <location>
        <begin position="92"/>
        <end position="125"/>
    </location>
</feature>
<feature type="splice variant" id="VSP_015382" description="In isoform 5." evidence="11">
    <location>
        <begin position="126"/>
        <end position="570"/>
    </location>
</feature>
<feature type="splice variant" id="VSP_015383" description="In isoform 3 and isoform 4." evidence="10 11">
    <original>A</original>
    <variation>V</variation>
    <location>
        <position position="511"/>
    </location>
</feature>
<feature type="splice variant" id="VSP_015384" description="In isoform 3 and isoform 4." evidence="10 11">
    <location>
        <begin position="512"/>
        <end position="570"/>
    </location>
</feature>
<feature type="mutagenesis site" description="Abrogates RNA-binding by DRBM 3 and interaction with XPO5 and nuclear export; when associated with A-237." evidence="8">
    <original>H</original>
    <variation>A</variation>
    <location>
        <position position="235"/>
    </location>
</feature>
<feature type="mutagenesis site" description="Abrogates RNA-binding by DRBM 3 and interaction with XPO5 and nuclear export; when associated with A-235." evidence="8">
    <original>K</original>
    <variation>A</variation>
    <location>
        <position position="237"/>
    </location>
</feature>
<feature type="mutagenesis site" description="Prevents nuclear localization of mutants lacking DRBM 3 function; when associated with 289-AAA-291." evidence="8">
    <original>KK</original>
    <variation>AA</variation>
    <location>
        <begin position="273"/>
        <end position="274"/>
    </location>
</feature>
<feature type="mutagenesis site" description="Prevents nuclear localization of mutants lacking DRBM 3 function; when associated with 257-AA-258." evidence="8">
    <original>KKR</original>
    <variation>AAA</variation>
    <location>
        <begin position="289"/>
        <end position="291"/>
    </location>
</feature>
<feature type="helix" evidence="12">
    <location>
        <begin position="308"/>
        <end position="318"/>
    </location>
</feature>
<feature type="strand" evidence="12">
    <location>
        <begin position="325"/>
        <end position="333"/>
    </location>
</feature>
<feature type="strand" evidence="12">
    <location>
        <begin position="339"/>
        <end position="346"/>
    </location>
</feature>
<feature type="strand" evidence="12">
    <location>
        <begin position="349"/>
        <end position="357"/>
    </location>
</feature>
<feature type="helix" evidence="12">
    <location>
        <begin position="358"/>
        <end position="373"/>
    </location>
</feature>
<feature type="helix" evidence="12">
    <location>
        <begin position="377"/>
        <end position="383"/>
    </location>
</feature>
<keyword id="KW-0002">3D-structure</keyword>
<keyword id="KW-0025">Alternative splicing</keyword>
<keyword id="KW-0963">Cytoplasm</keyword>
<keyword id="KW-0256">Endoplasmic reticulum</keyword>
<keyword id="KW-0493">Microtubule</keyword>
<keyword id="KW-0539">Nucleus</keyword>
<keyword id="KW-0597">Phosphoprotein</keyword>
<keyword id="KW-1185">Reference proteome</keyword>
<keyword id="KW-0677">Repeat</keyword>
<keyword id="KW-0694">RNA-binding</keyword>
<keyword id="KW-0813">Transport</keyword>
<accession>Q8CJ67</accession>
<accession>Q8BSY8</accession>
<accession>Q8CJ66</accession>
<accession>Q8R175</accession>
<accession>Q91Z19</accession>
<accession>Q9D5N7</accession>
<gene>
    <name type="primary">Stau2</name>
</gene>
<evidence type="ECO:0000250" key="1"/>
<evidence type="ECO:0000250" key="2">
    <source>
        <dbReference type="UniProtKB" id="Q68SB1"/>
    </source>
</evidence>
<evidence type="ECO:0000250" key="3">
    <source>
        <dbReference type="UniProtKB" id="Q9NUL3"/>
    </source>
</evidence>
<evidence type="ECO:0000255" key="4">
    <source>
        <dbReference type="PROSITE-ProRule" id="PRU00266"/>
    </source>
</evidence>
<evidence type="ECO:0000256" key="5">
    <source>
        <dbReference type="SAM" id="MobiDB-lite"/>
    </source>
</evidence>
<evidence type="ECO:0000269" key="6">
    <source>
    </source>
</evidence>
<evidence type="ECO:0000269" key="7">
    <source>
    </source>
</evidence>
<evidence type="ECO:0000269" key="8">
    <source>
    </source>
</evidence>
<evidence type="ECO:0000303" key="9">
    <source>
    </source>
</evidence>
<evidence type="ECO:0000303" key="10">
    <source>
    </source>
</evidence>
<evidence type="ECO:0000303" key="11">
    <source>
    </source>
</evidence>
<evidence type="ECO:0007829" key="12">
    <source>
        <dbReference type="PDB" id="1UHZ"/>
    </source>
</evidence>
<comment type="function">
    <text evidence="2">RNA-binding protein required for the microtubule-dependent transport of neuronal RNA from the cell body to the dendrite. As protein synthesis occurs within the dendrite, the localization of specific mRNAs to dendrites may be a prerequisite for neurite outgrowth and plasticity at sites distant from the cell body (By similarity).</text>
</comment>
<comment type="subunit">
    <text evidence="2 3 8">Interacts with microtubules. Isoform 2 and isoform 3 may also interact with ribosomes, and this association is independent of translation (By similarity). Identified in a mRNP complex, at least composed of DHX9, DDX3X, ELAVL1, HNRNPU, IGF2BP1, ILF3, PABPC1, PCBP2, PTBP2, STAU1, STAU2, SYNCRIP and YBX1. Interacts with the exportin XPO5. This requires RNA and RAN bound to GTP. Interacts with TRIM71 (via NHL repeats) in an RNA-dependent manner (By similarity).</text>
</comment>
<comment type="subcellular location">
    <subcellularLocation>
        <location evidence="8">Cytoplasm</location>
    </subcellularLocation>
    <subcellularLocation>
        <location evidence="8">Nucleus</location>
    </subcellularLocation>
    <subcellularLocation>
        <location evidence="8">Nucleus</location>
        <location evidence="8">Nucleolus</location>
    </subcellularLocation>
    <subcellularLocation>
        <location evidence="8">Endoplasmic reticulum</location>
    </subcellularLocation>
    <text>Shuttles between the nucleolus, nucleus and the cytoplasm. Nuclear export of isoform 1 is independent of XPO1/CRM1 and requires the exportin XPO5. Nuclear export of isoform 2 and isoform 3 can occur by both XPO1/CRM1-dependent and XPO1/CRM1-independent pathways. May also be found in large cytoplasmic ribonucleoprotein (RNP) granules which are present in the actin rich regions of myelinating processes and associated with microtubules, polysomes and the endoplasmic reticulum. Also recruited to stress granules (SGs) upon inhibition of translation or oxidative stress. These structures are thought to harbor housekeeping mRNAs when translation is aborted.</text>
</comment>
<comment type="alternative products">
    <event type="alternative splicing"/>
    <isoform>
        <id>Q8CJ67-1</id>
        <name>1</name>
        <name>Long</name>
        <sequence type="displayed"/>
    </isoform>
    <isoform>
        <id>Q8CJ67-2</id>
        <name>2</name>
        <name>Short</name>
        <sequence type="described" ref="VSP_015379 VSP_015380"/>
    </isoform>
    <isoform>
        <id>Q8CJ67-3</id>
        <name>3</name>
        <sequence type="described" ref="VSP_015379 VSP_015380 VSP_015383 VSP_015384"/>
    </isoform>
    <isoform>
        <id>Q8CJ67-4</id>
        <name>4</name>
        <sequence type="described" ref="VSP_015378 VSP_015383 VSP_015384"/>
    </isoform>
    <isoform>
        <id>Q8CJ67-5</id>
        <name>5</name>
        <sequence type="described" ref="VSP_015381 VSP_015382"/>
    </isoform>
</comment>
<comment type="tissue specificity">
    <text evidence="6 7">Expressed in brain and neurons, where isoform 2 and isoform 3 appear to be the most abundant. Expressed at the neuromuscular junction of the extensor digitorum longus, tibialis anterior and soleus muscles. Expression at neuromuscular junctions is most pronounced in slow-twitch muscle. Also weakly expressed in heart, kidney, ovary and testis.</text>
</comment>
<comment type="induction">
    <text evidence="7">Expression in extrasynaptic regions of muscle is induced by denervation. Expression in myoblasts is induced during differentiation into myotubes and by treatment with nerve derived trophic factors such as AGRN (agrin) and NRG1 (neuregulin).</text>
</comment>
<comment type="domain">
    <text evidence="6 8">The DRBM 3 domain appears to be the major RNA-binding determinant. This domain also mediates interaction with XPO5 and is required for XPO1/CRM1-independent nuclear export.</text>
</comment>
<proteinExistence type="evidence at protein level"/>